<proteinExistence type="evidence at protein level"/>
<keyword id="KW-0066">ATP synthesis</keyword>
<keyword id="KW-0067">ATP-binding</keyword>
<keyword id="KW-0085">Behavior</keyword>
<keyword id="KW-0966">Cell projection</keyword>
<keyword id="KW-0139">CF(1)</keyword>
<keyword id="KW-0969">Cilium</keyword>
<keyword id="KW-0375">Hydrogen ion transport</keyword>
<keyword id="KW-0406">Ion transport</keyword>
<keyword id="KW-0472">Membrane</keyword>
<keyword id="KW-0496">Mitochondrion</keyword>
<keyword id="KW-0999">Mitochondrion inner membrane</keyword>
<keyword id="KW-0547">Nucleotide-binding</keyword>
<keyword id="KW-1185">Reference proteome</keyword>
<keyword id="KW-0809">Transit peptide</keyword>
<keyword id="KW-1278">Translocase</keyword>
<keyword id="KW-0813">Transport</keyword>
<sequence length="538" mass="57527">MASRSLASISRSASRLLQSNVQKCALPAASIRLSSNNVESKKGIHTGVATQQAAAATKVSAKATAANASGRIVAVIGAVVDVQFDENLPPILNGLEVVGRSPRLILEVSQHLGDNVVRCIAMDGTEGLVRGQPVADTGDPIKIPVGPETLGRIMNVIGEPIDERGPIASKNFAAIHAEAPEFVEMSVEQEILVTGIKVVDLLAPYAKGGKIGLFGGAGVGKTVLIMELINNVAKAHGGYSVFAGVGERTREGNDLYHEMIEGGVIDLKGKNSKVSLVYGQMNEPPGARARVCLTGLTVAEYFRDQEGQDVLLFIDNIFRFTQAGSEVSALLGRIPSAVGYQPTLATDMGSMQERITTTKKGSITSVQAIYVPADDLTDPAPATTFAHLDATTVLSRGIAELAIYPAVDPLDSTSRIMDPNVVGQNHYDIARGVQKILQDYKSLQDIIAILGMDELSEEDKLTVSRARKIQRFLSQPFQVAEVFTGHQGKFVSLEETIRGFTMILKGELDHLPEVAFYMQGGIDDVFKKAEELAKQHGN</sequence>
<feature type="transit peptide" description="Mitochondrion" evidence="1">
    <location>
        <begin position="1"/>
        <end status="unknown"/>
    </location>
</feature>
<feature type="chain" id="PRO_0000002450" description="ATP synthase subunit beta, mitochondrial">
    <location>
        <begin status="unknown"/>
        <end position="538"/>
    </location>
</feature>
<feature type="binding site" evidence="1">
    <location>
        <begin position="215"/>
        <end position="222"/>
    </location>
    <ligand>
        <name>ATP</name>
        <dbReference type="ChEBI" id="CHEBI:30616"/>
    </ligand>
</feature>
<gene>
    <name evidence="4" type="primary">atp-2</name>
    <name evidence="4" type="ORF">C34E10.6</name>
</gene>
<reference key="1">
    <citation type="journal article" date="1998" name="Science">
        <title>Genome sequence of the nematode C. elegans: a platform for investigating biology.</title>
        <authorList>
            <consortium name="The C. elegans sequencing consortium"/>
        </authorList>
    </citation>
    <scope>NUCLEOTIDE SEQUENCE [LARGE SCALE GENOMIC DNA]</scope>
    <source>
        <strain>Bristol N2</strain>
    </source>
</reference>
<reference key="2">
    <citation type="journal article" date="2005" name="Mol. Biol. Cell">
        <title>ATP-2 interacts with the PLAT domain of LOV-1 and is involved in Caenorhabditis elegans polycystin signaling.</title>
        <authorList>
            <person name="Hu J."/>
            <person name="Barr M.M."/>
        </authorList>
    </citation>
    <scope>FUNCTION</scope>
    <scope>INTERACTION WITH LOV-1</scope>
    <scope>SUBCELLULAR LOCATION</scope>
    <scope>TISSUE SPECIFICITY</scope>
</reference>
<protein>
    <recommendedName>
        <fullName>ATP synthase subunit beta, mitochondrial</fullName>
        <ecNumber>7.1.2.2</ecNumber>
    </recommendedName>
</protein>
<evidence type="ECO:0000255" key="1"/>
<evidence type="ECO:0000269" key="2">
    <source>
    </source>
</evidence>
<evidence type="ECO:0000305" key="3"/>
<evidence type="ECO:0000312" key="4">
    <source>
        <dbReference type="WormBase" id="C34E10.6"/>
    </source>
</evidence>
<accession>P46561</accession>
<dbReference type="EC" id="7.1.2.2"/>
<dbReference type="EMBL" id="BX284603">
    <property type="protein sequence ID" value="CCD66650.1"/>
    <property type="molecule type" value="Genomic_DNA"/>
</dbReference>
<dbReference type="PIR" id="T15763">
    <property type="entry name" value="T15763"/>
</dbReference>
<dbReference type="RefSeq" id="NP_498111.2">
    <property type="nucleotide sequence ID" value="NM_065710.5"/>
</dbReference>
<dbReference type="SMR" id="P46561"/>
<dbReference type="BioGRID" id="40947">
    <property type="interactions" value="83"/>
</dbReference>
<dbReference type="DIP" id="DIP-24363N"/>
<dbReference type="FunCoup" id="P46561">
    <property type="interactions" value="1247"/>
</dbReference>
<dbReference type="IntAct" id="P46561">
    <property type="interactions" value="15"/>
</dbReference>
<dbReference type="STRING" id="6239.C34E10.6.1"/>
<dbReference type="PaxDb" id="6239-C34E10.6.1"/>
<dbReference type="PeptideAtlas" id="P46561"/>
<dbReference type="EnsemblMetazoa" id="C34E10.6.1">
    <property type="protein sequence ID" value="C34E10.6.1"/>
    <property type="gene ID" value="WBGene00000229"/>
</dbReference>
<dbReference type="EnsemblMetazoa" id="C34E10.6.2">
    <property type="protein sequence ID" value="C34E10.6.2"/>
    <property type="gene ID" value="WBGene00000229"/>
</dbReference>
<dbReference type="GeneID" id="175716"/>
<dbReference type="KEGG" id="cel:CELE_C34E10.6"/>
<dbReference type="UCSC" id="C34E10.6.2">
    <property type="organism name" value="c. elegans"/>
</dbReference>
<dbReference type="AGR" id="WB:WBGene00000229"/>
<dbReference type="CTD" id="175716"/>
<dbReference type="WormBase" id="C34E10.6">
    <property type="protein sequence ID" value="CE29950"/>
    <property type="gene ID" value="WBGene00000229"/>
    <property type="gene designation" value="atp-2"/>
</dbReference>
<dbReference type="eggNOG" id="KOG1350">
    <property type="taxonomic scope" value="Eukaryota"/>
</dbReference>
<dbReference type="GeneTree" id="ENSGT00550000074800"/>
<dbReference type="HOGENOM" id="CLU_022398_0_2_1"/>
<dbReference type="InParanoid" id="P46561"/>
<dbReference type="OMA" id="SMEEGGW"/>
<dbReference type="OrthoDB" id="14523at2759"/>
<dbReference type="PhylomeDB" id="P46561"/>
<dbReference type="Reactome" id="R-CEL-1268020">
    <property type="pathway name" value="Mitochondrial protein import"/>
</dbReference>
<dbReference type="Reactome" id="R-CEL-163210">
    <property type="pathway name" value="Formation of ATP by chemiosmotic coupling"/>
</dbReference>
<dbReference type="Reactome" id="R-CEL-8949613">
    <property type="pathway name" value="Cristae formation"/>
</dbReference>
<dbReference type="Reactome" id="R-CEL-9837999">
    <property type="pathway name" value="Mitochondrial protein degradation"/>
</dbReference>
<dbReference type="SignaLink" id="P46561"/>
<dbReference type="PRO" id="PR:P46561"/>
<dbReference type="Proteomes" id="UP000001940">
    <property type="component" value="Chromosome III"/>
</dbReference>
<dbReference type="Bgee" id="WBGene00000229">
    <property type="expression patterns" value="Expressed in embryo and 4 other cell types or tissues"/>
</dbReference>
<dbReference type="GO" id="GO:0005929">
    <property type="term" value="C:cilium"/>
    <property type="evidence" value="ECO:0000314"/>
    <property type="project" value="UniProtKB"/>
</dbReference>
<dbReference type="GO" id="GO:0005743">
    <property type="term" value="C:mitochondrial inner membrane"/>
    <property type="evidence" value="ECO:0007669"/>
    <property type="project" value="UniProtKB-SubCell"/>
</dbReference>
<dbReference type="GO" id="GO:0005739">
    <property type="term" value="C:mitochondrion"/>
    <property type="evidence" value="ECO:0000314"/>
    <property type="project" value="UniProtKB"/>
</dbReference>
<dbReference type="GO" id="GO:0097730">
    <property type="term" value="C:non-motile cilium"/>
    <property type="evidence" value="ECO:0000314"/>
    <property type="project" value="WormBase"/>
</dbReference>
<dbReference type="GO" id="GO:0045259">
    <property type="term" value="C:proton-transporting ATP synthase complex"/>
    <property type="evidence" value="ECO:0007669"/>
    <property type="project" value="UniProtKB-KW"/>
</dbReference>
<dbReference type="GO" id="GO:0005524">
    <property type="term" value="F:ATP binding"/>
    <property type="evidence" value="ECO:0007669"/>
    <property type="project" value="UniProtKB-KW"/>
</dbReference>
<dbReference type="GO" id="GO:0016887">
    <property type="term" value="F:ATP hydrolysis activity"/>
    <property type="evidence" value="ECO:0007669"/>
    <property type="project" value="InterPro"/>
</dbReference>
<dbReference type="GO" id="GO:0019904">
    <property type="term" value="F:protein domain specific binding"/>
    <property type="evidence" value="ECO:0000353"/>
    <property type="project" value="WormBase"/>
</dbReference>
<dbReference type="GO" id="GO:0046933">
    <property type="term" value="F:proton-transporting ATP synthase activity, rotational mechanism"/>
    <property type="evidence" value="ECO:0007669"/>
    <property type="project" value="InterPro"/>
</dbReference>
<dbReference type="GO" id="GO:0040024">
    <property type="term" value="P:dauer larval development"/>
    <property type="evidence" value="ECO:0000315"/>
    <property type="project" value="WormBase"/>
</dbReference>
<dbReference type="GO" id="GO:0030421">
    <property type="term" value="P:defecation"/>
    <property type="evidence" value="ECO:0000315"/>
    <property type="project" value="WormBase"/>
</dbReference>
<dbReference type="GO" id="GO:0050829">
    <property type="term" value="P:defense response to Gram-negative bacterium"/>
    <property type="evidence" value="ECO:0000315"/>
    <property type="project" value="UniProtKB"/>
</dbReference>
<dbReference type="GO" id="GO:0008340">
    <property type="term" value="P:determination of adult lifespan"/>
    <property type="evidence" value="ECO:0000315"/>
    <property type="project" value="WormBase"/>
</dbReference>
<dbReference type="GO" id="GO:0048598">
    <property type="term" value="P:embryonic morphogenesis"/>
    <property type="evidence" value="ECO:0000315"/>
    <property type="project" value="WormBase"/>
</dbReference>
<dbReference type="GO" id="GO:0008406">
    <property type="term" value="P:gonad development"/>
    <property type="evidence" value="ECO:0000315"/>
    <property type="project" value="WormBase"/>
</dbReference>
<dbReference type="GO" id="GO:0040039">
    <property type="term" value="P:inductive cell migration"/>
    <property type="evidence" value="ECO:0000315"/>
    <property type="project" value="WormBase"/>
</dbReference>
<dbReference type="GO" id="GO:0007617">
    <property type="term" value="P:mating behavior"/>
    <property type="evidence" value="ECO:0000315"/>
    <property type="project" value="WormBase"/>
</dbReference>
<dbReference type="GO" id="GO:0010629">
    <property type="term" value="P:negative regulation of gene expression"/>
    <property type="evidence" value="ECO:0000315"/>
    <property type="project" value="UniProtKB"/>
</dbReference>
<dbReference type="GO" id="GO:0002119">
    <property type="term" value="P:nematode larval development"/>
    <property type="evidence" value="ECO:0000315"/>
    <property type="project" value="WormBase"/>
</dbReference>
<dbReference type="GO" id="GO:0043050">
    <property type="term" value="P:nematode pharyngeal pumping"/>
    <property type="evidence" value="ECO:0000315"/>
    <property type="project" value="WormBase"/>
</dbReference>
<dbReference type="GO" id="GO:0042776">
    <property type="term" value="P:proton motive force-driven mitochondrial ATP synthesis"/>
    <property type="evidence" value="ECO:0000318"/>
    <property type="project" value="GO_Central"/>
</dbReference>
<dbReference type="CDD" id="cd18110">
    <property type="entry name" value="ATP-synt_F1_beta_C"/>
    <property type="match status" value="1"/>
</dbReference>
<dbReference type="CDD" id="cd18115">
    <property type="entry name" value="ATP-synt_F1_beta_N"/>
    <property type="match status" value="1"/>
</dbReference>
<dbReference type="CDD" id="cd01133">
    <property type="entry name" value="F1-ATPase_beta_CD"/>
    <property type="match status" value="1"/>
</dbReference>
<dbReference type="FunFam" id="1.10.1140.10:FF:000001">
    <property type="entry name" value="ATP synthase subunit beta"/>
    <property type="match status" value="1"/>
</dbReference>
<dbReference type="FunFam" id="2.40.10.170:FF:000004">
    <property type="entry name" value="ATP synthase subunit beta"/>
    <property type="match status" value="1"/>
</dbReference>
<dbReference type="FunFam" id="3.40.50.300:FF:000026">
    <property type="entry name" value="ATP synthase subunit beta"/>
    <property type="match status" value="1"/>
</dbReference>
<dbReference type="Gene3D" id="2.40.10.170">
    <property type="match status" value="1"/>
</dbReference>
<dbReference type="Gene3D" id="1.10.1140.10">
    <property type="entry name" value="Bovine Mitochondrial F1-atpase, Atp Synthase Beta Chain, Chain D, domain 3"/>
    <property type="match status" value="1"/>
</dbReference>
<dbReference type="Gene3D" id="3.40.50.300">
    <property type="entry name" value="P-loop containing nucleotide triphosphate hydrolases"/>
    <property type="match status" value="1"/>
</dbReference>
<dbReference type="HAMAP" id="MF_01347">
    <property type="entry name" value="ATP_synth_beta_bact"/>
    <property type="match status" value="1"/>
</dbReference>
<dbReference type="InterPro" id="IPR003593">
    <property type="entry name" value="AAA+_ATPase"/>
</dbReference>
<dbReference type="InterPro" id="IPR055190">
    <property type="entry name" value="ATP-synt_VA_C"/>
</dbReference>
<dbReference type="InterPro" id="IPR005722">
    <property type="entry name" value="ATP_synth_F1_bsu"/>
</dbReference>
<dbReference type="InterPro" id="IPR020003">
    <property type="entry name" value="ATPase_a/bsu_AS"/>
</dbReference>
<dbReference type="InterPro" id="IPR050053">
    <property type="entry name" value="ATPase_alpha/beta_chains"/>
</dbReference>
<dbReference type="InterPro" id="IPR004100">
    <property type="entry name" value="ATPase_F1/V1/A1_a/bsu_N"/>
</dbReference>
<dbReference type="InterPro" id="IPR036121">
    <property type="entry name" value="ATPase_F1/V1/A1_a/bsu_N_sf"/>
</dbReference>
<dbReference type="InterPro" id="IPR000194">
    <property type="entry name" value="ATPase_F1/V1/A1_a/bsu_nucl-bd"/>
</dbReference>
<dbReference type="InterPro" id="IPR024034">
    <property type="entry name" value="ATPase_F1/V1_b/a_C"/>
</dbReference>
<dbReference type="InterPro" id="IPR027417">
    <property type="entry name" value="P-loop_NTPase"/>
</dbReference>
<dbReference type="NCBIfam" id="TIGR01039">
    <property type="entry name" value="atpD"/>
    <property type="match status" value="1"/>
</dbReference>
<dbReference type="PANTHER" id="PTHR15184">
    <property type="entry name" value="ATP SYNTHASE"/>
    <property type="match status" value="1"/>
</dbReference>
<dbReference type="PANTHER" id="PTHR15184:SF71">
    <property type="entry name" value="ATP SYNTHASE SUBUNIT BETA, MITOCHONDRIAL"/>
    <property type="match status" value="1"/>
</dbReference>
<dbReference type="Pfam" id="PF00006">
    <property type="entry name" value="ATP-synt_ab"/>
    <property type="match status" value="1"/>
</dbReference>
<dbReference type="Pfam" id="PF02874">
    <property type="entry name" value="ATP-synt_ab_N"/>
    <property type="match status" value="1"/>
</dbReference>
<dbReference type="Pfam" id="PF22919">
    <property type="entry name" value="ATP-synt_VA_C"/>
    <property type="match status" value="1"/>
</dbReference>
<dbReference type="PIRSF" id="PIRSF039072">
    <property type="entry name" value="ATPase_subunit_beta"/>
    <property type="match status" value="1"/>
</dbReference>
<dbReference type="SMART" id="SM00382">
    <property type="entry name" value="AAA"/>
    <property type="match status" value="1"/>
</dbReference>
<dbReference type="SUPFAM" id="SSF47917">
    <property type="entry name" value="C-terminal domain of alpha and beta subunits of F1 ATP synthase"/>
    <property type="match status" value="1"/>
</dbReference>
<dbReference type="SUPFAM" id="SSF50615">
    <property type="entry name" value="N-terminal domain of alpha and beta subunits of F1 ATP synthase"/>
    <property type="match status" value="1"/>
</dbReference>
<dbReference type="SUPFAM" id="SSF52540">
    <property type="entry name" value="P-loop containing nucleoside triphosphate hydrolases"/>
    <property type="match status" value="1"/>
</dbReference>
<dbReference type="PROSITE" id="PS00152">
    <property type="entry name" value="ATPASE_ALPHA_BETA"/>
    <property type="match status" value="1"/>
</dbReference>
<comment type="function">
    <text evidence="2 3">Mitochondrial membrane ATP synthase (F(1)F(0) ATP synthase or Complex V) produces ATP from ADP in the presence of a proton gradient across the membrane which is generated by electron transport complexes of the respiratory chain. F-type ATPases consist of two structural domains, F(1) - containing the extramembraneous catalytic core, and F(0) - containing the membrane proton channel, linked together by a central stalk and a peripheral stalk. During catalysis, ATP synthesis in the catalytic domain of F(1) is coupled via a rotary mechanism of the central stalk subunits to proton translocation. Subunits alpha and beta form the catalytic core in F(1). Rotation of the central stalk against the surrounding subunits leads to hydrolysis of ATP in three separate catalytic sites on the beta subunits (Probable). Required during male mating behavior for the response to hermaphrodite contact, acting with lov-1 and pkd-2. May be involved in polycystin signaling.</text>
</comment>
<comment type="catalytic activity">
    <reaction>
        <text>ATP + H2O + 4 H(+)(in) = ADP + phosphate + 5 H(+)(out)</text>
        <dbReference type="Rhea" id="RHEA:57720"/>
        <dbReference type="ChEBI" id="CHEBI:15377"/>
        <dbReference type="ChEBI" id="CHEBI:15378"/>
        <dbReference type="ChEBI" id="CHEBI:30616"/>
        <dbReference type="ChEBI" id="CHEBI:43474"/>
        <dbReference type="ChEBI" id="CHEBI:456216"/>
        <dbReference type="EC" id="7.1.2.2"/>
    </reaction>
</comment>
<comment type="subunit">
    <text evidence="2 3">Subunit of the F-type ATPase which has 2 components, CF(1) - the catalytic core - and CF(0) - the membrane proton channel (Probable). Interacts (via N-terminus) with lov-1 (via PLAT domain).</text>
</comment>
<comment type="interaction">
    <interactant intactId="EBI-316294">
        <id>P46561</id>
    </interactant>
    <interactant intactId="EBI-296172">
        <id>P50488</id>
        <label>daf-4</label>
    </interactant>
    <organismsDiffer>false</organismsDiffer>
    <experiments>2</experiments>
</comment>
<comment type="interaction">
    <interactant intactId="EBI-316294">
        <id>P46561</id>
    </interactant>
    <interactant intactId="EBI-2529627">
        <id>Q09624</id>
        <label>lov-1</label>
    </interactant>
    <organismsDiffer>false</organismsDiffer>
    <experiments>4</experiments>
</comment>
<comment type="subcellular location">
    <subcellularLocation>
        <location evidence="2">Cell projection</location>
        <location evidence="2">Cilium</location>
    </subcellularLocation>
    <subcellularLocation>
        <location evidence="2">Mitochondrion</location>
    </subcellularLocation>
    <subcellularLocation>
        <location evidence="2">Mitochondrion inner membrane</location>
    </subcellularLocation>
    <text>Peripheral membrane protein. Localizes to the cilium only in male-specific sensory neurons.</text>
</comment>
<comment type="tissue specificity">
    <text evidence="2">Expressed in three categories of adult male sensory neurons: tail ray B neurons, HOB hook neuron and head cephalic (CEM) neurons.</text>
</comment>
<comment type="developmental stage">
    <text>Widely expressed throughout development in both males and hermaphrodites.</text>
</comment>
<comment type="similarity">
    <text evidence="3">Belongs to the ATPase alpha/beta chains family.</text>
</comment>
<name>ATPB_CAEEL</name>
<organism>
    <name type="scientific">Caenorhabditis elegans</name>
    <dbReference type="NCBI Taxonomy" id="6239"/>
    <lineage>
        <taxon>Eukaryota</taxon>
        <taxon>Metazoa</taxon>
        <taxon>Ecdysozoa</taxon>
        <taxon>Nematoda</taxon>
        <taxon>Chromadorea</taxon>
        <taxon>Rhabditida</taxon>
        <taxon>Rhabditina</taxon>
        <taxon>Rhabditomorpha</taxon>
        <taxon>Rhabditoidea</taxon>
        <taxon>Rhabditidae</taxon>
        <taxon>Peloderinae</taxon>
        <taxon>Caenorhabditis</taxon>
    </lineage>
</organism>